<keyword id="KW-0413">Isomerase</keyword>
<keyword id="KW-1185">Reference proteome</keyword>
<keyword id="KW-0819">tRNA processing</keyword>
<proteinExistence type="inferred from homology"/>
<feature type="chain" id="PRO_0000121797" description="tRNA pseudouridine synthase B">
    <location>
        <begin position="1"/>
        <end position="387"/>
    </location>
</feature>
<feature type="active site" description="Nucleophile" evidence="1">
    <location>
        <position position="43"/>
    </location>
</feature>
<protein>
    <recommendedName>
        <fullName evidence="1">tRNA pseudouridine synthase B</fullName>
        <ecNumber evidence="1">5.4.99.25</ecNumber>
    </recommendedName>
    <alternativeName>
        <fullName evidence="1">tRNA pseudouridine(55) synthase</fullName>
        <shortName evidence="1">Psi55 synthase</shortName>
    </alternativeName>
    <alternativeName>
        <fullName evidence="1">tRNA pseudouridylate synthase</fullName>
    </alternativeName>
    <alternativeName>
        <fullName evidence="1">tRNA-uridine isomerase</fullName>
    </alternativeName>
</protein>
<name>TRUB_BIFLO</name>
<evidence type="ECO:0000255" key="1">
    <source>
        <dbReference type="HAMAP-Rule" id="MF_01080"/>
    </source>
</evidence>
<reference key="1">
    <citation type="journal article" date="2002" name="Proc. Natl. Acad. Sci. U.S.A.">
        <title>The genome sequence of Bifidobacterium longum reflects its adaptation to the human gastrointestinal tract.</title>
        <authorList>
            <person name="Schell M.A."/>
            <person name="Karmirantzou M."/>
            <person name="Snel B."/>
            <person name="Vilanova D."/>
            <person name="Berger B."/>
            <person name="Pessi G."/>
            <person name="Zwahlen M.-C."/>
            <person name="Desiere F."/>
            <person name="Bork P."/>
            <person name="Delley M."/>
            <person name="Pridmore R.D."/>
            <person name="Arigoni F."/>
        </authorList>
    </citation>
    <scope>NUCLEOTIDE SEQUENCE [LARGE SCALE GENOMIC DNA]</scope>
    <source>
        <strain>NCC 2705</strain>
    </source>
</reference>
<gene>
    <name evidence="1" type="primary">truB</name>
    <name type="ordered locus">BL1618</name>
</gene>
<accession>Q8CY45</accession>
<sequence length="387" mass="41719">MLHTTPSGLLIIDKPQGVTSFDAVAAVRGALHIKKVGHAGTLDPMATGTLVIAFGHATRLLNAIVAHDKTYEATIRLGLRTTTDDAEGEVLVDGEARSRWQTLSAQLTEGGQSGEPTALPTASWQDLLTRTIATNFTGDIEQVPNTFSAIKINGQRAYDLAREGKDVELKPRPVTISEFTVLDIRSGFVAGEQAAEPLREDANTGAIPALDVDVRISCSSGTYIRALARDLGKELGVGGYLTRLRRTRVGRFALPDDASGLIAPEAMLDTRTHTVTAHTDQKTFTNREGQTVTRNKCVLDTPEGLAGDERRNWLLDHALTMEQAARGAMPALDITPEEASELRFGRRIERTISEPTAAIVPQTHDVAAIIERANAHQAKPVTVFPLA</sequence>
<organism>
    <name type="scientific">Bifidobacterium longum (strain NCC 2705)</name>
    <dbReference type="NCBI Taxonomy" id="206672"/>
    <lineage>
        <taxon>Bacteria</taxon>
        <taxon>Bacillati</taxon>
        <taxon>Actinomycetota</taxon>
        <taxon>Actinomycetes</taxon>
        <taxon>Bifidobacteriales</taxon>
        <taxon>Bifidobacteriaceae</taxon>
        <taxon>Bifidobacterium</taxon>
    </lineage>
</organism>
<dbReference type="EC" id="5.4.99.25" evidence="1"/>
<dbReference type="EMBL" id="AE014295">
    <property type="protein sequence ID" value="AAN25406.1"/>
    <property type="molecule type" value="Genomic_DNA"/>
</dbReference>
<dbReference type="RefSeq" id="NP_696770.1">
    <property type="nucleotide sequence ID" value="NC_004307.2"/>
</dbReference>
<dbReference type="RefSeq" id="WP_011068748.1">
    <property type="nucleotide sequence ID" value="NC_004307.2"/>
</dbReference>
<dbReference type="SMR" id="Q8CY45"/>
<dbReference type="STRING" id="206672.BL1618"/>
<dbReference type="EnsemblBacteria" id="AAN25406">
    <property type="protein sequence ID" value="AAN25406"/>
    <property type="gene ID" value="BL1618"/>
</dbReference>
<dbReference type="KEGG" id="blo:BL1618"/>
<dbReference type="PATRIC" id="fig|206672.9.peg.1673"/>
<dbReference type="HOGENOM" id="CLU_032087_0_0_11"/>
<dbReference type="OrthoDB" id="9802309at2"/>
<dbReference type="PhylomeDB" id="Q8CY45"/>
<dbReference type="Proteomes" id="UP000000439">
    <property type="component" value="Chromosome"/>
</dbReference>
<dbReference type="GO" id="GO:0003723">
    <property type="term" value="F:RNA binding"/>
    <property type="evidence" value="ECO:0007669"/>
    <property type="project" value="InterPro"/>
</dbReference>
<dbReference type="GO" id="GO:0160148">
    <property type="term" value="F:tRNA pseudouridine(55) synthase activity"/>
    <property type="evidence" value="ECO:0007669"/>
    <property type="project" value="UniProtKB-EC"/>
</dbReference>
<dbReference type="GO" id="GO:1990481">
    <property type="term" value="P:mRNA pseudouridine synthesis"/>
    <property type="evidence" value="ECO:0007669"/>
    <property type="project" value="TreeGrafter"/>
</dbReference>
<dbReference type="GO" id="GO:0031119">
    <property type="term" value="P:tRNA pseudouridine synthesis"/>
    <property type="evidence" value="ECO:0007669"/>
    <property type="project" value="UniProtKB-UniRule"/>
</dbReference>
<dbReference type="CDD" id="cd02573">
    <property type="entry name" value="PseudoU_synth_EcTruB"/>
    <property type="match status" value="1"/>
</dbReference>
<dbReference type="Gene3D" id="3.30.2350.10">
    <property type="entry name" value="Pseudouridine synthase"/>
    <property type="match status" value="1"/>
</dbReference>
<dbReference type="Gene3D" id="2.30.130.10">
    <property type="entry name" value="PUA domain"/>
    <property type="match status" value="1"/>
</dbReference>
<dbReference type="HAMAP" id="MF_01080">
    <property type="entry name" value="TruB_bact"/>
    <property type="match status" value="1"/>
</dbReference>
<dbReference type="InterPro" id="IPR020103">
    <property type="entry name" value="PsdUridine_synth_cat_dom_sf"/>
</dbReference>
<dbReference type="InterPro" id="IPR002501">
    <property type="entry name" value="PsdUridine_synth_N"/>
</dbReference>
<dbReference type="InterPro" id="IPR036974">
    <property type="entry name" value="PUA_sf"/>
</dbReference>
<dbReference type="InterPro" id="IPR015225">
    <property type="entry name" value="tRNA_psdUridine_synth_fam2_C"/>
</dbReference>
<dbReference type="InterPro" id="IPR014780">
    <property type="entry name" value="tRNA_psdUridine_synth_TruB"/>
</dbReference>
<dbReference type="InterPro" id="IPR032819">
    <property type="entry name" value="TruB_C"/>
</dbReference>
<dbReference type="PANTHER" id="PTHR13767:SF2">
    <property type="entry name" value="PSEUDOURIDYLATE SYNTHASE TRUB1"/>
    <property type="match status" value="1"/>
</dbReference>
<dbReference type="PANTHER" id="PTHR13767">
    <property type="entry name" value="TRNA-PSEUDOURIDINE SYNTHASE"/>
    <property type="match status" value="1"/>
</dbReference>
<dbReference type="Pfam" id="PF09142">
    <property type="entry name" value="TruB_C"/>
    <property type="match status" value="1"/>
</dbReference>
<dbReference type="Pfam" id="PF16198">
    <property type="entry name" value="TruB_C_2"/>
    <property type="match status" value="1"/>
</dbReference>
<dbReference type="Pfam" id="PF01509">
    <property type="entry name" value="TruB_N"/>
    <property type="match status" value="2"/>
</dbReference>
<dbReference type="SUPFAM" id="SSF55120">
    <property type="entry name" value="Pseudouridine synthase"/>
    <property type="match status" value="1"/>
</dbReference>
<comment type="function">
    <text evidence="1">Responsible for synthesis of pseudouridine from uracil-55 in the psi GC loop of transfer RNAs.</text>
</comment>
<comment type="catalytic activity">
    <reaction evidence="1">
        <text>uridine(55) in tRNA = pseudouridine(55) in tRNA</text>
        <dbReference type="Rhea" id="RHEA:42532"/>
        <dbReference type="Rhea" id="RHEA-COMP:10101"/>
        <dbReference type="Rhea" id="RHEA-COMP:10102"/>
        <dbReference type="ChEBI" id="CHEBI:65314"/>
        <dbReference type="ChEBI" id="CHEBI:65315"/>
        <dbReference type="EC" id="5.4.99.25"/>
    </reaction>
</comment>
<comment type="similarity">
    <text evidence="1">Belongs to the pseudouridine synthase TruB family. Type 1 subfamily.</text>
</comment>